<evidence type="ECO:0000255" key="1">
    <source>
        <dbReference type="HAMAP-Rule" id="MF_01104"/>
    </source>
</evidence>
<dbReference type="EMBL" id="CP000644">
    <property type="protein sequence ID" value="ABO91170.1"/>
    <property type="molecule type" value="Genomic_DNA"/>
</dbReference>
<dbReference type="RefSeq" id="WP_005312021.1">
    <property type="nucleotide sequence ID" value="NC_009348.1"/>
</dbReference>
<dbReference type="SMR" id="A4SQJ8"/>
<dbReference type="STRING" id="29491.GCA_000820065_03557"/>
<dbReference type="KEGG" id="asa:ASA_3177"/>
<dbReference type="PATRIC" id="fig|382245.13.peg.3154"/>
<dbReference type="eggNOG" id="ENOG502ZCMR">
    <property type="taxonomic scope" value="Bacteria"/>
</dbReference>
<dbReference type="HOGENOM" id="CLU_121866_0_0_6"/>
<dbReference type="Proteomes" id="UP000000225">
    <property type="component" value="Chromosome"/>
</dbReference>
<dbReference type="GO" id="GO:0009898">
    <property type="term" value="C:cytoplasmic side of plasma membrane"/>
    <property type="evidence" value="ECO:0007669"/>
    <property type="project" value="InterPro"/>
</dbReference>
<dbReference type="CDD" id="cd16323">
    <property type="entry name" value="Syd"/>
    <property type="match status" value="1"/>
</dbReference>
<dbReference type="Gene3D" id="3.40.1580.20">
    <property type="entry name" value="Syd protein"/>
    <property type="match status" value="1"/>
</dbReference>
<dbReference type="HAMAP" id="MF_01104">
    <property type="entry name" value="Syd"/>
    <property type="match status" value="1"/>
</dbReference>
<dbReference type="InterPro" id="IPR009948">
    <property type="entry name" value="Syd"/>
</dbReference>
<dbReference type="InterPro" id="IPR038228">
    <property type="entry name" value="Syd_sf"/>
</dbReference>
<dbReference type="NCBIfam" id="NF003439">
    <property type="entry name" value="PRK04968.1"/>
    <property type="match status" value="1"/>
</dbReference>
<dbReference type="Pfam" id="PF07348">
    <property type="entry name" value="Syd"/>
    <property type="match status" value="1"/>
</dbReference>
<reference key="1">
    <citation type="journal article" date="2008" name="BMC Genomics">
        <title>The genome of Aeromonas salmonicida subsp. salmonicida A449: insights into the evolution of a fish pathogen.</title>
        <authorList>
            <person name="Reith M.E."/>
            <person name="Singh R.K."/>
            <person name="Curtis B."/>
            <person name="Boyd J.M."/>
            <person name="Bouevitch A."/>
            <person name="Kimball J."/>
            <person name="Munholland J."/>
            <person name="Murphy C."/>
            <person name="Sarty D."/>
            <person name="Williams J."/>
            <person name="Nash J.H."/>
            <person name="Johnson S.C."/>
            <person name="Brown L.L."/>
        </authorList>
    </citation>
    <scope>NUCLEOTIDE SEQUENCE [LARGE SCALE GENOMIC DNA]</scope>
    <source>
        <strain>A449</strain>
    </source>
</reference>
<gene>
    <name evidence="1" type="primary">syd</name>
    <name type="ordered locus">ASA_3177</name>
</gene>
<organism>
    <name type="scientific">Aeromonas salmonicida (strain A449)</name>
    <dbReference type="NCBI Taxonomy" id="382245"/>
    <lineage>
        <taxon>Bacteria</taxon>
        <taxon>Pseudomonadati</taxon>
        <taxon>Pseudomonadota</taxon>
        <taxon>Gammaproteobacteria</taxon>
        <taxon>Aeromonadales</taxon>
        <taxon>Aeromonadaceae</taxon>
        <taxon>Aeromonas</taxon>
    </lineage>
</organism>
<protein>
    <recommendedName>
        <fullName evidence="1">Protein Syd</fullName>
    </recommendedName>
</protein>
<proteinExistence type="inferred from homology"/>
<accession>A4SQJ8</accession>
<keyword id="KW-0997">Cell inner membrane</keyword>
<keyword id="KW-1003">Cell membrane</keyword>
<keyword id="KW-0472">Membrane</keyword>
<name>SYDP_AERS4</name>
<feature type="chain" id="PRO_0000298246" description="Protein Syd">
    <location>
        <begin position="1"/>
        <end position="182"/>
    </location>
</feature>
<comment type="function">
    <text evidence="1">Interacts with the SecY protein in vivo. May bind preferentially to an uncomplexed state of SecY, thus functioning either as a chelating agent for excess SecY in the cell or as a regulatory factor that negatively controls the translocase function.</text>
</comment>
<comment type="subcellular location">
    <subcellularLocation>
        <location evidence="1">Cell inner membrane</location>
        <topology evidence="1">Peripheral membrane protein</topology>
        <orientation evidence="1">Cytoplasmic side</orientation>
    </subcellularLocation>
    <text evidence="1">Loosely associated with the cytoplasmic side of the inner membrane, probably via SecY.</text>
</comment>
<comment type="similarity">
    <text evidence="1">Belongs to the Syd family.</text>
</comment>
<sequence>MSDQVLSALEHFFLRWQRDGEARRGLPLCEWEADWRSPCELDEPREGRVAWRPHQRQQAADFAAMANALELVLHPAAQALFGHWFSRPIPCSYKGLRLEIILPWNEADLNLLRENLIGHLLMLRKLKRTPSLFIATTRNEMTLVSLDNESGQVWLEWLDSGRRLTLAPSLPAFLERLETLPH</sequence>